<dbReference type="EMBL" id="CP000260">
    <property type="protein sequence ID" value="ABF33297.1"/>
    <property type="molecule type" value="Genomic_DNA"/>
</dbReference>
<dbReference type="RefSeq" id="WP_002986045.1">
    <property type="nucleotide sequence ID" value="NZ_CVUH01000002.1"/>
</dbReference>
<dbReference type="SMR" id="Q1JIM6"/>
<dbReference type="GeneID" id="69900199"/>
<dbReference type="KEGG" id="sph:MGAS10270_Spy0232"/>
<dbReference type="HOGENOM" id="CLU_002794_4_1_9"/>
<dbReference type="Proteomes" id="UP000002436">
    <property type="component" value="Chromosome"/>
</dbReference>
<dbReference type="GO" id="GO:0005737">
    <property type="term" value="C:cytoplasm"/>
    <property type="evidence" value="ECO:0007669"/>
    <property type="project" value="UniProtKB-SubCell"/>
</dbReference>
<dbReference type="GO" id="GO:0005525">
    <property type="term" value="F:GTP binding"/>
    <property type="evidence" value="ECO:0007669"/>
    <property type="project" value="UniProtKB-UniRule"/>
</dbReference>
<dbReference type="GO" id="GO:0003924">
    <property type="term" value="F:GTPase activity"/>
    <property type="evidence" value="ECO:0007669"/>
    <property type="project" value="InterPro"/>
</dbReference>
<dbReference type="GO" id="GO:0003746">
    <property type="term" value="F:translation elongation factor activity"/>
    <property type="evidence" value="ECO:0007669"/>
    <property type="project" value="UniProtKB-UniRule"/>
</dbReference>
<dbReference type="GO" id="GO:0032790">
    <property type="term" value="P:ribosome disassembly"/>
    <property type="evidence" value="ECO:0007669"/>
    <property type="project" value="TreeGrafter"/>
</dbReference>
<dbReference type="CDD" id="cd01886">
    <property type="entry name" value="EF-G"/>
    <property type="match status" value="1"/>
</dbReference>
<dbReference type="CDD" id="cd16262">
    <property type="entry name" value="EFG_III"/>
    <property type="match status" value="1"/>
</dbReference>
<dbReference type="CDD" id="cd01434">
    <property type="entry name" value="EFG_mtEFG1_IV"/>
    <property type="match status" value="1"/>
</dbReference>
<dbReference type="CDD" id="cd03713">
    <property type="entry name" value="EFG_mtEFG_C"/>
    <property type="match status" value="1"/>
</dbReference>
<dbReference type="CDD" id="cd04088">
    <property type="entry name" value="EFG_mtEFG_II"/>
    <property type="match status" value="1"/>
</dbReference>
<dbReference type="FunFam" id="2.40.30.10:FF:000006">
    <property type="entry name" value="Elongation factor G"/>
    <property type="match status" value="1"/>
</dbReference>
<dbReference type="FunFam" id="3.30.230.10:FF:000003">
    <property type="entry name" value="Elongation factor G"/>
    <property type="match status" value="1"/>
</dbReference>
<dbReference type="FunFam" id="3.30.70.240:FF:000001">
    <property type="entry name" value="Elongation factor G"/>
    <property type="match status" value="1"/>
</dbReference>
<dbReference type="FunFam" id="3.30.70.870:FF:000001">
    <property type="entry name" value="Elongation factor G"/>
    <property type="match status" value="1"/>
</dbReference>
<dbReference type="FunFam" id="3.40.50.300:FF:000029">
    <property type="entry name" value="Elongation factor G"/>
    <property type="match status" value="1"/>
</dbReference>
<dbReference type="Gene3D" id="3.30.230.10">
    <property type="match status" value="1"/>
</dbReference>
<dbReference type="Gene3D" id="3.30.70.240">
    <property type="match status" value="1"/>
</dbReference>
<dbReference type="Gene3D" id="3.30.70.870">
    <property type="entry name" value="Elongation Factor G (Translational Gtpase), domain 3"/>
    <property type="match status" value="1"/>
</dbReference>
<dbReference type="Gene3D" id="3.40.50.300">
    <property type="entry name" value="P-loop containing nucleotide triphosphate hydrolases"/>
    <property type="match status" value="1"/>
</dbReference>
<dbReference type="Gene3D" id="2.40.30.10">
    <property type="entry name" value="Translation factors"/>
    <property type="match status" value="1"/>
</dbReference>
<dbReference type="HAMAP" id="MF_00054_B">
    <property type="entry name" value="EF_G_EF_2_B"/>
    <property type="match status" value="1"/>
</dbReference>
<dbReference type="InterPro" id="IPR041095">
    <property type="entry name" value="EFG_II"/>
</dbReference>
<dbReference type="InterPro" id="IPR009022">
    <property type="entry name" value="EFG_III"/>
</dbReference>
<dbReference type="InterPro" id="IPR035647">
    <property type="entry name" value="EFG_III/V"/>
</dbReference>
<dbReference type="InterPro" id="IPR047872">
    <property type="entry name" value="EFG_IV"/>
</dbReference>
<dbReference type="InterPro" id="IPR035649">
    <property type="entry name" value="EFG_V"/>
</dbReference>
<dbReference type="InterPro" id="IPR000640">
    <property type="entry name" value="EFG_V-like"/>
</dbReference>
<dbReference type="InterPro" id="IPR004161">
    <property type="entry name" value="EFTu-like_2"/>
</dbReference>
<dbReference type="InterPro" id="IPR031157">
    <property type="entry name" value="G_TR_CS"/>
</dbReference>
<dbReference type="InterPro" id="IPR027417">
    <property type="entry name" value="P-loop_NTPase"/>
</dbReference>
<dbReference type="InterPro" id="IPR020568">
    <property type="entry name" value="Ribosomal_Su5_D2-typ_SF"/>
</dbReference>
<dbReference type="InterPro" id="IPR014721">
    <property type="entry name" value="Ribsml_uS5_D2-typ_fold_subgr"/>
</dbReference>
<dbReference type="InterPro" id="IPR005225">
    <property type="entry name" value="Small_GTP-bd"/>
</dbReference>
<dbReference type="InterPro" id="IPR000795">
    <property type="entry name" value="T_Tr_GTP-bd_dom"/>
</dbReference>
<dbReference type="InterPro" id="IPR009000">
    <property type="entry name" value="Transl_B-barrel_sf"/>
</dbReference>
<dbReference type="InterPro" id="IPR004540">
    <property type="entry name" value="Transl_elong_EFG/EF2"/>
</dbReference>
<dbReference type="InterPro" id="IPR005517">
    <property type="entry name" value="Transl_elong_EFG/EF2_IV"/>
</dbReference>
<dbReference type="NCBIfam" id="TIGR00484">
    <property type="entry name" value="EF-G"/>
    <property type="match status" value="1"/>
</dbReference>
<dbReference type="NCBIfam" id="NF009379">
    <property type="entry name" value="PRK12740.1-3"/>
    <property type="match status" value="1"/>
</dbReference>
<dbReference type="NCBIfam" id="NF009381">
    <property type="entry name" value="PRK12740.1-5"/>
    <property type="match status" value="1"/>
</dbReference>
<dbReference type="NCBIfam" id="TIGR00231">
    <property type="entry name" value="small_GTP"/>
    <property type="match status" value="1"/>
</dbReference>
<dbReference type="PANTHER" id="PTHR43261:SF1">
    <property type="entry name" value="RIBOSOME-RELEASING FACTOR 2, MITOCHONDRIAL"/>
    <property type="match status" value="1"/>
</dbReference>
<dbReference type="PANTHER" id="PTHR43261">
    <property type="entry name" value="TRANSLATION ELONGATION FACTOR G-RELATED"/>
    <property type="match status" value="1"/>
</dbReference>
<dbReference type="Pfam" id="PF00679">
    <property type="entry name" value="EFG_C"/>
    <property type="match status" value="1"/>
</dbReference>
<dbReference type="Pfam" id="PF14492">
    <property type="entry name" value="EFG_III"/>
    <property type="match status" value="1"/>
</dbReference>
<dbReference type="Pfam" id="PF03764">
    <property type="entry name" value="EFG_IV"/>
    <property type="match status" value="1"/>
</dbReference>
<dbReference type="Pfam" id="PF00009">
    <property type="entry name" value="GTP_EFTU"/>
    <property type="match status" value="1"/>
</dbReference>
<dbReference type="Pfam" id="PF03144">
    <property type="entry name" value="GTP_EFTU_D2"/>
    <property type="match status" value="1"/>
</dbReference>
<dbReference type="PRINTS" id="PR00315">
    <property type="entry name" value="ELONGATNFCT"/>
</dbReference>
<dbReference type="SMART" id="SM00838">
    <property type="entry name" value="EFG_C"/>
    <property type="match status" value="1"/>
</dbReference>
<dbReference type="SMART" id="SM00889">
    <property type="entry name" value="EFG_IV"/>
    <property type="match status" value="1"/>
</dbReference>
<dbReference type="SUPFAM" id="SSF54980">
    <property type="entry name" value="EF-G C-terminal domain-like"/>
    <property type="match status" value="2"/>
</dbReference>
<dbReference type="SUPFAM" id="SSF52540">
    <property type="entry name" value="P-loop containing nucleoside triphosphate hydrolases"/>
    <property type="match status" value="1"/>
</dbReference>
<dbReference type="SUPFAM" id="SSF54211">
    <property type="entry name" value="Ribosomal protein S5 domain 2-like"/>
    <property type="match status" value="1"/>
</dbReference>
<dbReference type="SUPFAM" id="SSF50447">
    <property type="entry name" value="Translation proteins"/>
    <property type="match status" value="1"/>
</dbReference>
<dbReference type="PROSITE" id="PS00301">
    <property type="entry name" value="G_TR_1"/>
    <property type="match status" value="1"/>
</dbReference>
<dbReference type="PROSITE" id="PS51722">
    <property type="entry name" value="G_TR_2"/>
    <property type="match status" value="1"/>
</dbReference>
<accession>Q1JIM6</accession>
<proteinExistence type="inferred from homology"/>
<sequence>MAREFSLAKTRNIGIMAHVDAGKTTTTERILYYTGKIHKIGETHEGASQMDWMEQEQERGITITSAATTAQWDGHRVNIIDTPGHVDFTIEVQRSLRVLDGAVTVLDSQSGVEPQTETVWRQATEYGVPRIVFANKMDKIGADFLYSVQTLHDRLQANAHPIQLPIGAEDDFRGIIDLIKMKAEIYTNDLGTDILEEDIPEEYLEQAQEYREKLIEAVAETDEDLMMKYLEGEEITNDELIAGIRKATINVEFFPVLCGSAFKNKGVQLMLDAVIAYLPSPLDIPAIKGVNPDTDAEEERPASDEEPFAALAFKIMTDPFVGRLTFFRVYSGVLNSGSYVMNTSKGKRERIGRILQMHANSRQEIETVYAGDIAAAVGLKDTTTGDSLTDEKAKVILESIEVPEPVIQLMVEPKSKADQDKMGVALQKLAEEDPTFRVETNVETGETVIAGMGELHLDVLVDRMKREFKVEANVGAPQVSYRETFRASTQARGFFKRQSGGKGQFGDVWIEFTPNEEGKGFEFENAIVGGVVPREFIPAVEKGLIESMANGVLAGYPMVDVKAKLYDGSYHDVDSSETAFKIAASLALKEAAKSAQPAILEPMMLVTITAPEDNLGDVMGHVTARRGRVDGMEAHGNSQIVRAYVPLAEMFGYATVLRSATQGRGTFMMVFDHYEDVPKSVQEEIIKKNKGE</sequence>
<protein>
    <recommendedName>
        <fullName evidence="1">Elongation factor G</fullName>
        <shortName evidence="1">EF-G</shortName>
    </recommendedName>
</protein>
<feature type="chain" id="PRO_0000263518" description="Elongation factor G">
    <location>
        <begin position="1"/>
        <end position="692"/>
    </location>
</feature>
<feature type="domain" description="tr-type G">
    <location>
        <begin position="8"/>
        <end position="282"/>
    </location>
</feature>
<feature type="binding site" evidence="1">
    <location>
        <begin position="17"/>
        <end position="24"/>
    </location>
    <ligand>
        <name>GTP</name>
        <dbReference type="ChEBI" id="CHEBI:37565"/>
    </ligand>
</feature>
<feature type="binding site" evidence="1">
    <location>
        <begin position="81"/>
        <end position="85"/>
    </location>
    <ligand>
        <name>GTP</name>
        <dbReference type="ChEBI" id="CHEBI:37565"/>
    </ligand>
</feature>
<feature type="binding site" evidence="1">
    <location>
        <begin position="135"/>
        <end position="138"/>
    </location>
    <ligand>
        <name>GTP</name>
        <dbReference type="ChEBI" id="CHEBI:37565"/>
    </ligand>
</feature>
<reference key="1">
    <citation type="journal article" date="2006" name="Proc. Natl. Acad. Sci. U.S.A.">
        <title>Molecular genetic anatomy of inter- and intraserotype variation in the human bacterial pathogen group A Streptococcus.</title>
        <authorList>
            <person name="Beres S.B."/>
            <person name="Richter E.W."/>
            <person name="Nagiec M.J."/>
            <person name="Sumby P."/>
            <person name="Porcella S.F."/>
            <person name="DeLeo F.R."/>
            <person name="Musser J.M."/>
        </authorList>
    </citation>
    <scope>NUCLEOTIDE SEQUENCE [LARGE SCALE GENOMIC DNA]</scope>
    <source>
        <strain>MGAS10270</strain>
    </source>
</reference>
<evidence type="ECO:0000255" key="1">
    <source>
        <dbReference type="HAMAP-Rule" id="MF_00054"/>
    </source>
</evidence>
<name>EFG_STRPD</name>
<organism>
    <name type="scientific">Streptococcus pyogenes serotype M2 (strain MGAS10270)</name>
    <dbReference type="NCBI Taxonomy" id="370552"/>
    <lineage>
        <taxon>Bacteria</taxon>
        <taxon>Bacillati</taxon>
        <taxon>Bacillota</taxon>
        <taxon>Bacilli</taxon>
        <taxon>Lactobacillales</taxon>
        <taxon>Streptococcaceae</taxon>
        <taxon>Streptococcus</taxon>
    </lineage>
</organism>
<gene>
    <name evidence="1" type="primary">fusA</name>
    <name type="ordered locus">MGAS10270_Spy0232</name>
</gene>
<keyword id="KW-0963">Cytoplasm</keyword>
<keyword id="KW-0251">Elongation factor</keyword>
<keyword id="KW-0342">GTP-binding</keyword>
<keyword id="KW-0547">Nucleotide-binding</keyword>
<keyword id="KW-0648">Protein biosynthesis</keyword>
<comment type="function">
    <text evidence="1">Catalyzes the GTP-dependent ribosomal translocation step during translation elongation. During this step, the ribosome changes from the pre-translocational (PRE) to the post-translocational (POST) state as the newly formed A-site-bound peptidyl-tRNA and P-site-bound deacylated tRNA move to the P and E sites, respectively. Catalyzes the coordinated movement of the two tRNA molecules, the mRNA and conformational changes in the ribosome.</text>
</comment>
<comment type="subcellular location">
    <subcellularLocation>
        <location evidence="1">Cytoplasm</location>
    </subcellularLocation>
</comment>
<comment type="similarity">
    <text evidence="1">Belongs to the TRAFAC class translation factor GTPase superfamily. Classic translation factor GTPase family. EF-G/EF-2 subfamily.</text>
</comment>